<comment type="function">
    <text evidence="1">Catalyzes the NADPH-dependent reduction of L-glutamate 5-phosphate into L-glutamate 5-semialdehyde and phosphate. The product spontaneously undergoes cyclization to form 1-pyrroline-5-carboxylate.</text>
</comment>
<comment type="catalytic activity">
    <reaction evidence="1">
        <text>L-glutamate 5-semialdehyde + phosphate + NADP(+) = L-glutamyl 5-phosphate + NADPH + H(+)</text>
        <dbReference type="Rhea" id="RHEA:19541"/>
        <dbReference type="ChEBI" id="CHEBI:15378"/>
        <dbReference type="ChEBI" id="CHEBI:43474"/>
        <dbReference type="ChEBI" id="CHEBI:57783"/>
        <dbReference type="ChEBI" id="CHEBI:58066"/>
        <dbReference type="ChEBI" id="CHEBI:58274"/>
        <dbReference type="ChEBI" id="CHEBI:58349"/>
        <dbReference type="EC" id="1.2.1.41"/>
    </reaction>
</comment>
<comment type="pathway">
    <text evidence="1">Amino-acid biosynthesis; L-proline biosynthesis; L-glutamate 5-semialdehyde from L-glutamate: step 2/2.</text>
</comment>
<comment type="subcellular location">
    <subcellularLocation>
        <location evidence="1">Cytoplasm</location>
    </subcellularLocation>
</comment>
<comment type="similarity">
    <text evidence="1">Belongs to the gamma-glutamyl phosphate reductase family.</text>
</comment>
<sequence>MQETIRNTFKSVRQASRELVMIGEQAINSILIDLAETIPDCSSSILEANRRDLDRMDPADPMFDRLLLNEKRLEIIAADIRNVATLPSPLDIVLEQRRLPNGLELKKITVPIGVIGIIYEARPNVTFDVFALCLKSGNATVLKGGSDAHESNTAIVECIKTVLRRNGINDNTLSLLPSEREAAGIMLNAVDSIDMIIPRGSQKLIDFVRQNAKVPVIETGAGIVHTYIDKNADTGIAAKVIFNAKTRRPSVCNALDTLLVHAAKLDDLPQITAPLQEKKVVIYADEAAYAKLQGSYPESLLERARPEHFGTEFLSLKLSVKTVSSIEEALDHIAEYSSRHSEAIITNDPEAKAEFLKRVDAAVVYANTSTAFTDGAQFGLGAEIGISTQKLHARGPMALKELTSYKWIIEGDGQTRSV</sequence>
<proteinExistence type="inferred from homology"/>
<organism>
    <name type="scientific">Chlorobium limicola (strain DSM 245 / NBRC 103803 / 6330)</name>
    <dbReference type="NCBI Taxonomy" id="290315"/>
    <lineage>
        <taxon>Bacteria</taxon>
        <taxon>Pseudomonadati</taxon>
        <taxon>Chlorobiota</taxon>
        <taxon>Chlorobiia</taxon>
        <taxon>Chlorobiales</taxon>
        <taxon>Chlorobiaceae</taxon>
        <taxon>Chlorobium/Pelodictyon group</taxon>
        <taxon>Chlorobium</taxon>
    </lineage>
</organism>
<feature type="chain" id="PRO_1000193583" description="Gamma-glutamyl phosphate reductase">
    <location>
        <begin position="1"/>
        <end position="418"/>
    </location>
</feature>
<name>PROA_CHLL2</name>
<accession>B3EE24</accession>
<keyword id="KW-0028">Amino-acid biosynthesis</keyword>
<keyword id="KW-0963">Cytoplasm</keyword>
<keyword id="KW-0521">NADP</keyword>
<keyword id="KW-0560">Oxidoreductase</keyword>
<keyword id="KW-0641">Proline biosynthesis</keyword>
<gene>
    <name evidence="1" type="primary">proA</name>
    <name type="ordered locus">Clim_1684</name>
</gene>
<evidence type="ECO:0000255" key="1">
    <source>
        <dbReference type="HAMAP-Rule" id="MF_00412"/>
    </source>
</evidence>
<reference key="1">
    <citation type="submission" date="2008-05" db="EMBL/GenBank/DDBJ databases">
        <title>Complete sequence of Chlorobium limicola DSM 245.</title>
        <authorList>
            <consortium name="US DOE Joint Genome Institute"/>
            <person name="Lucas S."/>
            <person name="Copeland A."/>
            <person name="Lapidus A."/>
            <person name="Glavina del Rio T."/>
            <person name="Dalin E."/>
            <person name="Tice H."/>
            <person name="Bruce D."/>
            <person name="Goodwin L."/>
            <person name="Pitluck S."/>
            <person name="Schmutz J."/>
            <person name="Larimer F."/>
            <person name="Land M."/>
            <person name="Hauser L."/>
            <person name="Kyrpides N."/>
            <person name="Ovchinnikova G."/>
            <person name="Zhao F."/>
            <person name="Li T."/>
            <person name="Liu Z."/>
            <person name="Overmann J."/>
            <person name="Bryant D.A."/>
            <person name="Richardson P."/>
        </authorList>
    </citation>
    <scope>NUCLEOTIDE SEQUENCE [LARGE SCALE GENOMIC DNA]</scope>
    <source>
        <strain>DSM 245 / NBRC 103803 / 6330</strain>
    </source>
</reference>
<protein>
    <recommendedName>
        <fullName evidence="1">Gamma-glutamyl phosphate reductase</fullName>
        <shortName evidence="1">GPR</shortName>
        <ecNumber evidence="1">1.2.1.41</ecNumber>
    </recommendedName>
    <alternativeName>
        <fullName evidence="1">Glutamate-5-semialdehyde dehydrogenase</fullName>
    </alternativeName>
    <alternativeName>
        <fullName evidence="1">Glutamyl-gamma-semialdehyde dehydrogenase</fullName>
        <shortName evidence="1">GSA dehydrogenase</shortName>
    </alternativeName>
</protein>
<dbReference type="EC" id="1.2.1.41" evidence="1"/>
<dbReference type="EMBL" id="CP001097">
    <property type="protein sequence ID" value="ACD90726.1"/>
    <property type="molecule type" value="Genomic_DNA"/>
</dbReference>
<dbReference type="RefSeq" id="WP_012466599.1">
    <property type="nucleotide sequence ID" value="NC_010803.1"/>
</dbReference>
<dbReference type="SMR" id="B3EE24"/>
<dbReference type="STRING" id="290315.Clim_1684"/>
<dbReference type="KEGG" id="cli:Clim_1684"/>
<dbReference type="eggNOG" id="COG0014">
    <property type="taxonomic scope" value="Bacteria"/>
</dbReference>
<dbReference type="HOGENOM" id="CLU_030231_0_0_10"/>
<dbReference type="OrthoDB" id="9809970at2"/>
<dbReference type="UniPathway" id="UPA00098">
    <property type="reaction ID" value="UER00360"/>
</dbReference>
<dbReference type="Proteomes" id="UP000008841">
    <property type="component" value="Chromosome"/>
</dbReference>
<dbReference type="GO" id="GO:0005737">
    <property type="term" value="C:cytoplasm"/>
    <property type="evidence" value="ECO:0007669"/>
    <property type="project" value="UniProtKB-SubCell"/>
</dbReference>
<dbReference type="GO" id="GO:0004350">
    <property type="term" value="F:glutamate-5-semialdehyde dehydrogenase activity"/>
    <property type="evidence" value="ECO:0007669"/>
    <property type="project" value="UniProtKB-UniRule"/>
</dbReference>
<dbReference type="GO" id="GO:0050661">
    <property type="term" value="F:NADP binding"/>
    <property type="evidence" value="ECO:0007669"/>
    <property type="project" value="InterPro"/>
</dbReference>
<dbReference type="GO" id="GO:0055129">
    <property type="term" value="P:L-proline biosynthetic process"/>
    <property type="evidence" value="ECO:0007669"/>
    <property type="project" value="UniProtKB-UniRule"/>
</dbReference>
<dbReference type="CDD" id="cd07079">
    <property type="entry name" value="ALDH_F18-19_ProA-GPR"/>
    <property type="match status" value="1"/>
</dbReference>
<dbReference type="FunFam" id="3.40.309.10:FF:000006">
    <property type="entry name" value="Gamma-glutamyl phosphate reductase"/>
    <property type="match status" value="1"/>
</dbReference>
<dbReference type="Gene3D" id="3.40.605.10">
    <property type="entry name" value="Aldehyde Dehydrogenase, Chain A, domain 1"/>
    <property type="match status" value="1"/>
</dbReference>
<dbReference type="Gene3D" id="3.40.309.10">
    <property type="entry name" value="Aldehyde Dehydrogenase, Chain A, domain 2"/>
    <property type="match status" value="1"/>
</dbReference>
<dbReference type="HAMAP" id="MF_00412">
    <property type="entry name" value="ProA"/>
    <property type="match status" value="1"/>
</dbReference>
<dbReference type="InterPro" id="IPR016161">
    <property type="entry name" value="Ald_DH/histidinol_DH"/>
</dbReference>
<dbReference type="InterPro" id="IPR016163">
    <property type="entry name" value="Ald_DH_C"/>
</dbReference>
<dbReference type="InterPro" id="IPR016162">
    <property type="entry name" value="Ald_DH_N"/>
</dbReference>
<dbReference type="InterPro" id="IPR015590">
    <property type="entry name" value="Aldehyde_DH_dom"/>
</dbReference>
<dbReference type="InterPro" id="IPR020593">
    <property type="entry name" value="G-glutamylP_reductase_CS"/>
</dbReference>
<dbReference type="InterPro" id="IPR012134">
    <property type="entry name" value="Glu-5-SA_DH"/>
</dbReference>
<dbReference type="InterPro" id="IPR000965">
    <property type="entry name" value="GPR_dom"/>
</dbReference>
<dbReference type="NCBIfam" id="NF001221">
    <property type="entry name" value="PRK00197.1"/>
    <property type="match status" value="1"/>
</dbReference>
<dbReference type="NCBIfam" id="TIGR00407">
    <property type="entry name" value="proA"/>
    <property type="match status" value="1"/>
</dbReference>
<dbReference type="PANTHER" id="PTHR11063:SF8">
    <property type="entry name" value="DELTA-1-PYRROLINE-5-CARBOXYLATE SYNTHASE"/>
    <property type="match status" value="1"/>
</dbReference>
<dbReference type="PANTHER" id="PTHR11063">
    <property type="entry name" value="GLUTAMATE SEMIALDEHYDE DEHYDROGENASE"/>
    <property type="match status" value="1"/>
</dbReference>
<dbReference type="Pfam" id="PF00171">
    <property type="entry name" value="Aldedh"/>
    <property type="match status" value="1"/>
</dbReference>
<dbReference type="PIRSF" id="PIRSF000151">
    <property type="entry name" value="GPR"/>
    <property type="match status" value="1"/>
</dbReference>
<dbReference type="SUPFAM" id="SSF53720">
    <property type="entry name" value="ALDH-like"/>
    <property type="match status" value="1"/>
</dbReference>
<dbReference type="PROSITE" id="PS01223">
    <property type="entry name" value="PROA"/>
    <property type="match status" value="1"/>
</dbReference>